<feature type="chain" id="PRO_0000167023" description="Probable glycine dehydrogenase (decarboxylating) subunit 2">
    <location>
        <begin position="1"/>
        <end position="473"/>
    </location>
</feature>
<feature type="modified residue" description="N6-(pyridoxal phosphate)lysine" evidence="1">
    <location>
        <position position="266"/>
    </location>
</feature>
<evidence type="ECO:0000255" key="1">
    <source>
        <dbReference type="HAMAP-Rule" id="MF_00713"/>
    </source>
</evidence>
<sequence length="473" mass="52629">MSFPLIFERSRKGRRGLKLVKAVPKAEDLIPKEHLREVPPRLPEVDELTLVRHYTGLSRRQVGVDTTFYPLGSCTMKYNPKLHEEAARLFADLHPYQDPRTAQGALRLMWELGEYLKALTGMDAITLEPAAGAHGELTGILIIRAYHEDRGEGRTRRVVLVPDSAHGSNPATASMAGYQVREIPSGPEGEVDLEALKRELGPHVAALMLTNPNTLGLFERRILEISRLCKEAGVQLYYDGANLNAIMGWARPGDMGFDVVHLNLHKTFTVPHGGGGPGSGPVGVKAHLAPYLPVPLVERGEEGFYLDFDRPKSIGRVRSFYGNFLALVRAWAYIRTLGLEGLKKAAALAVLNARYLKELLKEKGYRVPYDGPSMHEFVAQPPQGFRALDLAKGLLELGFHPPTVYFPLIVKEALMVEPTETEAKETLEAFAEAMGALLKKPKEWLENAPYSTPVRRLDELRANRSPKLTYFDE</sequence>
<keyword id="KW-0560">Oxidoreductase</keyword>
<keyword id="KW-0663">Pyridoxal phosphate</keyword>
<gene>
    <name evidence="1" type="primary">gcvPB</name>
    <name type="ordered locus">TT_C0151</name>
</gene>
<dbReference type="EC" id="1.4.4.2" evidence="1"/>
<dbReference type="EMBL" id="AE017221">
    <property type="protein sequence ID" value="AAS80499.1"/>
    <property type="molecule type" value="Genomic_DNA"/>
</dbReference>
<dbReference type="RefSeq" id="WP_011172606.1">
    <property type="nucleotide sequence ID" value="NC_005835.1"/>
</dbReference>
<dbReference type="SMR" id="P62030"/>
<dbReference type="KEGG" id="tth:TT_C0151"/>
<dbReference type="eggNOG" id="COG1003">
    <property type="taxonomic scope" value="Bacteria"/>
</dbReference>
<dbReference type="HOGENOM" id="CLU_004620_5_0_0"/>
<dbReference type="OrthoDB" id="9801272at2"/>
<dbReference type="Proteomes" id="UP000000592">
    <property type="component" value="Chromosome"/>
</dbReference>
<dbReference type="GO" id="GO:0005829">
    <property type="term" value="C:cytosol"/>
    <property type="evidence" value="ECO:0007669"/>
    <property type="project" value="TreeGrafter"/>
</dbReference>
<dbReference type="GO" id="GO:0005960">
    <property type="term" value="C:glycine cleavage complex"/>
    <property type="evidence" value="ECO:0007669"/>
    <property type="project" value="TreeGrafter"/>
</dbReference>
<dbReference type="GO" id="GO:0016594">
    <property type="term" value="F:glycine binding"/>
    <property type="evidence" value="ECO:0007669"/>
    <property type="project" value="TreeGrafter"/>
</dbReference>
<dbReference type="GO" id="GO:0004375">
    <property type="term" value="F:glycine dehydrogenase (decarboxylating) activity"/>
    <property type="evidence" value="ECO:0007669"/>
    <property type="project" value="UniProtKB-EC"/>
</dbReference>
<dbReference type="GO" id="GO:0030170">
    <property type="term" value="F:pyridoxal phosphate binding"/>
    <property type="evidence" value="ECO:0007669"/>
    <property type="project" value="TreeGrafter"/>
</dbReference>
<dbReference type="GO" id="GO:0019464">
    <property type="term" value="P:glycine decarboxylation via glycine cleavage system"/>
    <property type="evidence" value="ECO:0007669"/>
    <property type="project" value="UniProtKB-UniRule"/>
</dbReference>
<dbReference type="CDD" id="cd00613">
    <property type="entry name" value="GDC-P"/>
    <property type="match status" value="1"/>
</dbReference>
<dbReference type="FunFam" id="3.40.640.10:FF:000224">
    <property type="entry name" value="Probable glycine dehydrogenase (decarboxylating) subunit 2"/>
    <property type="match status" value="1"/>
</dbReference>
<dbReference type="Gene3D" id="6.20.440.10">
    <property type="match status" value="1"/>
</dbReference>
<dbReference type="Gene3D" id="3.90.1150.10">
    <property type="entry name" value="Aspartate Aminotransferase, domain 1"/>
    <property type="match status" value="1"/>
</dbReference>
<dbReference type="Gene3D" id="3.40.640.10">
    <property type="entry name" value="Type I PLP-dependent aspartate aminotransferase-like (Major domain)"/>
    <property type="match status" value="1"/>
</dbReference>
<dbReference type="HAMAP" id="MF_00713">
    <property type="entry name" value="GcvPB"/>
    <property type="match status" value="1"/>
</dbReference>
<dbReference type="InterPro" id="IPR023012">
    <property type="entry name" value="GcvPB"/>
</dbReference>
<dbReference type="InterPro" id="IPR049316">
    <property type="entry name" value="GDC-P_C"/>
</dbReference>
<dbReference type="InterPro" id="IPR020581">
    <property type="entry name" value="GDC_P"/>
</dbReference>
<dbReference type="InterPro" id="IPR015424">
    <property type="entry name" value="PyrdxlP-dep_Trfase"/>
</dbReference>
<dbReference type="InterPro" id="IPR015421">
    <property type="entry name" value="PyrdxlP-dep_Trfase_major"/>
</dbReference>
<dbReference type="InterPro" id="IPR015422">
    <property type="entry name" value="PyrdxlP-dep_Trfase_small"/>
</dbReference>
<dbReference type="NCBIfam" id="NF003346">
    <property type="entry name" value="PRK04366.1"/>
    <property type="match status" value="1"/>
</dbReference>
<dbReference type="PANTHER" id="PTHR11773:SF1">
    <property type="entry name" value="GLYCINE DEHYDROGENASE (DECARBOXYLATING), MITOCHONDRIAL"/>
    <property type="match status" value="1"/>
</dbReference>
<dbReference type="PANTHER" id="PTHR11773">
    <property type="entry name" value="GLYCINE DEHYDROGENASE, DECARBOXYLATING"/>
    <property type="match status" value="1"/>
</dbReference>
<dbReference type="Pfam" id="PF21478">
    <property type="entry name" value="GcvP2_C"/>
    <property type="match status" value="1"/>
</dbReference>
<dbReference type="SUPFAM" id="SSF53383">
    <property type="entry name" value="PLP-dependent transferases"/>
    <property type="match status" value="1"/>
</dbReference>
<accession>P62030</accession>
<name>GCSPB_THET2</name>
<organism>
    <name type="scientific">Thermus thermophilus (strain ATCC BAA-163 / DSM 7039 / HB27)</name>
    <dbReference type="NCBI Taxonomy" id="262724"/>
    <lineage>
        <taxon>Bacteria</taxon>
        <taxon>Thermotogati</taxon>
        <taxon>Deinococcota</taxon>
        <taxon>Deinococci</taxon>
        <taxon>Thermales</taxon>
        <taxon>Thermaceae</taxon>
        <taxon>Thermus</taxon>
    </lineage>
</organism>
<reference key="1">
    <citation type="journal article" date="2004" name="Nat. Biotechnol.">
        <title>The genome sequence of the extreme thermophile Thermus thermophilus.</title>
        <authorList>
            <person name="Henne A."/>
            <person name="Brueggemann H."/>
            <person name="Raasch C."/>
            <person name="Wiezer A."/>
            <person name="Hartsch T."/>
            <person name="Liesegang H."/>
            <person name="Johann A."/>
            <person name="Lienard T."/>
            <person name="Gohl O."/>
            <person name="Martinez-Arias R."/>
            <person name="Jacobi C."/>
            <person name="Starkuviene V."/>
            <person name="Schlenczeck S."/>
            <person name="Dencker S."/>
            <person name="Huber R."/>
            <person name="Klenk H.-P."/>
            <person name="Kramer W."/>
            <person name="Merkl R."/>
            <person name="Gottschalk G."/>
            <person name="Fritz H.-J."/>
        </authorList>
    </citation>
    <scope>NUCLEOTIDE SEQUENCE [LARGE SCALE GENOMIC DNA]</scope>
    <source>
        <strain>ATCC BAA-163 / DSM 7039 / HB27</strain>
    </source>
</reference>
<comment type="function">
    <text evidence="1">The glycine cleavage system catalyzes the degradation of glycine. The P protein binds the alpha-amino group of glycine through its pyridoxal phosphate cofactor; CO(2) is released and the remaining methylamine moiety is then transferred to the lipoamide cofactor of the H protein.</text>
</comment>
<comment type="catalytic activity">
    <reaction evidence="1">
        <text>N(6)-[(R)-lipoyl]-L-lysyl-[glycine-cleavage complex H protein] + glycine + H(+) = N(6)-[(R)-S(8)-aminomethyldihydrolipoyl]-L-lysyl-[glycine-cleavage complex H protein] + CO2</text>
        <dbReference type="Rhea" id="RHEA:24304"/>
        <dbReference type="Rhea" id="RHEA-COMP:10494"/>
        <dbReference type="Rhea" id="RHEA-COMP:10495"/>
        <dbReference type="ChEBI" id="CHEBI:15378"/>
        <dbReference type="ChEBI" id="CHEBI:16526"/>
        <dbReference type="ChEBI" id="CHEBI:57305"/>
        <dbReference type="ChEBI" id="CHEBI:83099"/>
        <dbReference type="ChEBI" id="CHEBI:83143"/>
        <dbReference type="EC" id="1.4.4.2"/>
    </reaction>
</comment>
<comment type="cofactor">
    <cofactor evidence="1">
        <name>pyridoxal 5'-phosphate</name>
        <dbReference type="ChEBI" id="CHEBI:597326"/>
    </cofactor>
</comment>
<comment type="subunit">
    <text evidence="1">The glycine cleavage system is composed of four proteins: P, T, L and H. In this organism, the P 'protein' is a heterodimer of two subunits.</text>
</comment>
<comment type="similarity">
    <text evidence="1">Belongs to the GcvP family. C-terminal subunit subfamily.</text>
</comment>
<proteinExistence type="inferred from homology"/>
<protein>
    <recommendedName>
        <fullName evidence="1">Probable glycine dehydrogenase (decarboxylating) subunit 2</fullName>
        <ecNumber evidence="1">1.4.4.2</ecNumber>
    </recommendedName>
    <alternativeName>
        <fullName evidence="1">Glycine cleavage system P-protein subunit 2</fullName>
    </alternativeName>
    <alternativeName>
        <fullName evidence="1">Glycine decarboxylase subunit 2</fullName>
    </alternativeName>
    <alternativeName>
        <fullName evidence="1">Glycine dehydrogenase (aminomethyl-transferring) subunit 2</fullName>
    </alternativeName>
</protein>